<organism>
    <name type="scientific">Escherichia coli (strain SE11)</name>
    <dbReference type="NCBI Taxonomy" id="409438"/>
    <lineage>
        <taxon>Bacteria</taxon>
        <taxon>Pseudomonadati</taxon>
        <taxon>Pseudomonadota</taxon>
        <taxon>Gammaproteobacteria</taxon>
        <taxon>Enterobacterales</taxon>
        <taxon>Enterobacteriaceae</taxon>
        <taxon>Escherichia</taxon>
    </lineage>
</organism>
<reference key="1">
    <citation type="journal article" date="2008" name="DNA Res.">
        <title>Complete genome sequence and comparative analysis of the wild-type commensal Escherichia coli strain SE11 isolated from a healthy adult.</title>
        <authorList>
            <person name="Oshima K."/>
            <person name="Toh H."/>
            <person name="Ogura Y."/>
            <person name="Sasamoto H."/>
            <person name="Morita H."/>
            <person name="Park S.-H."/>
            <person name="Ooka T."/>
            <person name="Iyoda S."/>
            <person name="Taylor T.D."/>
            <person name="Hayashi T."/>
            <person name="Itoh K."/>
            <person name="Hattori M."/>
        </authorList>
    </citation>
    <scope>NUCLEOTIDE SEQUENCE [LARGE SCALE GENOMIC DNA]</scope>
    <source>
        <strain>SE11</strain>
    </source>
</reference>
<protein>
    <recommendedName>
        <fullName evidence="1">Heat shock protein HspQ</fullName>
    </recommendedName>
</protein>
<comment type="function">
    <text evidence="1">Involved in the degradation of certain denaturated proteins, including DnaA, during heat shock stress.</text>
</comment>
<comment type="subcellular location">
    <subcellularLocation>
        <location evidence="1">Cytoplasm</location>
    </subcellularLocation>
</comment>
<comment type="similarity">
    <text evidence="1">Belongs to the HspQ family.</text>
</comment>
<proteinExistence type="inferred from homology"/>
<feature type="chain" id="PRO_1000138409" description="Heat shock protein HspQ">
    <location>
        <begin position="1"/>
        <end position="105"/>
    </location>
</feature>
<feature type="region of interest" description="Disordered" evidence="2">
    <location>
        <begin position="75"/>
        <end position="105"/>
    </location>
</feature>
<accession>B6I941</accession>
<evidence type="ECO:0000255" key="1">
    <source>
        <dbReference type="HAMAP-Rule" id="MF_01194"/>
    </source>
</evidence>
<evidence type="ECO:0000256" key="2">
    <source>
        <dbReference type="SAM" id="MobiDB-lite"/>
    </source>
</evidence>
<gene>
    <name evidence="1" type="primary">hspQ</name>
    <name type="ordered locus">ECSE_1028</name>
</gene>
<sequence length="105" mass="11779">MIASKFGIGQQVRHSLLGYLGVVVDIDPVYSLSEPSPDELAVNDELRAAPWYHVVMEDDNGLPVHTYLAEAQLSSELQDEHPEQPSMDELAQTIRKQLQAPRLRN</sequence>
<keyword id="KW-0963">Cytoplasm</keyword>
<keyword id="KW-0346">Stress response</keyword>
<name>HSPQ_ECOSE</name>
<dbReference type="EMBL" id="AP009240">
    <property type="protein sequence ID" value="BAG76552.1"/>
    <property type="molecule type" value="Genomic_DNA"/>
</dbReference>
<dbReference type="RefSeq" id="WP_001295356.1">
    <property type="nucleotide sequence ID" value="NC_011415.1"/>
</dbReference>
<dbReference type="SMR" id="B6I941"/>
<dbReference type="GeneID" id="93776448"/>
<dbReference type="KEGG" id="ecy:ECSE_1028"/>
<dbReference type="HOGENOM" id="CLU_123865_1_0_6"/>
<dbReference type="Proteomes" id="UP000008199">
    <property type="component" value="Chromosome"/>
</dbReference>
<dbReference type="GO" id="GO:0005737">
    <property type="term" value="C:cytoplasm"/>
    <property type="evidence" value="ECO:0007669"/>
    <property type="project" value="UniProtKB-SubCell"/>
</dbReference>
<dbReference type="GO" id="GO:0003677">
    <property type="term" value="F:DNA binding"/>
    <property type="evidence" value="ECO:0007669"/>
    <property type="project" value="InterPro"/>
</dbReference>
<dbReference type="GO" id="GO:0009408">
    <property type="term" value="P:response to heat"/>
    <property type="evidence" value="ECO:0007669"/>
    <property type="project" value="UniProtKB-UniRule"/>
</dbReference>
<dbReference type="Gene3D" id="2.30.30.390">
    <property type="entry name" value="Hemimethylated DNA-binding domain"/>
    <property type="match status" value="1"/>
</dbReference>
<dbReference type="HAMAP" id="MF_01194">
    <property type="entry name" value="HspQ"/>
    <property type="match status" value="1"/>
</dbReference>
<dbReference type="InterPro" id="IPR011722">
    <property type="entry name" value="Hemimethylated_DNA-bd_dom"/>
</dbReference>
<dbReference type="InterPro" id="IPR036623">
    <property type="entry name" value="Hemimethylated_DNA-bd_sf"/>
</dbReference>
<dbReference type="InterPro" id="IPR022866">
    <property type="entry name" value="HspQ"/>
</dbReference>
<dbReference type="NCBIfam" id="NF010729">
    <property type="entry name" value="PRK14129.1"/>
    <property type="match status" value="1"/>
</dbReference>
<dbReference type="NCBIfam" id="TIGR02097">
    <property type="entry name" value="yccV"/>
    <property type="match status" value="1"/>
</dbReference>
<dbReference type="Pfam" id="PF08755">
    <property type="entry name" value="YccV-like"/>
    <property type="match status" value="1"/>
</dbReference>
<dbReference type="SMART" id="SM00992">
    <property type="entry name" value="YccV-like"/>
    <property type="match status" value="1"/>
</dbReference>
<dbReference type="SUPFAM" id="SSF141255">
    <property type="entry name" value="YccV-like"/>
    <property type="match status" value="1"/>
</dbReference>